<feature type="chain" id="PRO_0000209379" description="Regulatory ATPase RavA">
    <location>
        <begin position="1"/>
        <end position="498"/>
    </location>
</feature>
<feature type="binding site" evidence="1">
    <location>
        <position position="23"/>
    </location>
    <ligand>
        <name>ADP</name>
        <dbReference type="ChEBI" id="CHEBI:456216"/>
    </ligand>
</feature>
<feature type="binding site" evidence="1">
    <location>
        <position position="49"/>
    </location>
    <ligand>
        <name>ADP</name>
        <dbReference type="ChEBI" id="CHEBI:456216"/>
    </ligand>
</feature>
<feature type="binding site" evidence="1">
    <location>
        <position position="50"/>
    </location>
    <ligand>
        <name>ADP</name>
        <dbReference type="ChEBI" id="CHEBI:456216"/>
    </ligand>
</feature>
<feature type="binding site" evidence="1">
    <location>
        <position position="51"/>
    </location>
    <ligand>
        <name>ADP</name>
        <dbReference type="ChEBI" id="CHEBI:456216"/>
    </ligand>
</feature>
<feature type="binding site" evidence="1">
    <location>
        <position position="52"/>
    </location>
    <ligand>
        <name>ADP</name>
        <dbReference type="ChEBI" id="CHEBI:456216"/>
    </ligand>
</feature>
<feature type="binding site" evidence="1">
    <location>
        <position position="53"/>
    </location>
    <ligand>
        <name>ADP</name>
        <dbReference type="ChEBI" id="CHEBI:456216"/>
    </ligand>
</feature>
<feature type="binding site" evidence="1">
    <location>
        <position position="54"/>
    </location>
    <ligand>
        <name>ADP</name>
        <dbReference type="ChEBI" id="CHEBI:456216"/>
    </ligand>
</feature>
<feature type="binding site" evidence="1">
    <location>
        <position position="196"/>
    </location>
    <ligand>
        <name>ADP</name>
        <dbReference type="ChEBI" id="CHEBI:456216"/>
    </ligand>
</feature>
<accession>Q329T5</accession>
<gene>
    <name evidence="1" type="primary">ravA</name>
    <name type="ordered locus">SDY_4002</name>
</gene>
<protein>
    <recommendedName>
        <fullName evidence="1">Regulatory ATPase RavA</fullName>
        <ecNumber evidence="1">3.6.1.-</ecNumber>
    </recommendedName>
    <alternativeName>
        <fullName evidence="1">Regulatory ATPase variant A</fullName>
    </alternativeName>
</protein>
<proteinExistence type="inferred from homology"/>
<comment type="function">
    <text evidence="1">Component of the RavA-ViaA chaperone complex, which may act on the membrane to optimize the function of some of the respiratory chains. RavA functions as an ATPase.</text>
</comment>
<comment type="catalytic activity">
    <reaction evidence="1">
        <text>ATP + H2O = ADP + phosphate + H(+)</text>
        <dbReference type="Rhea" id="RHEA:13065"/>
        <dbReference type="ChEBI" id="CHEBI:15377"/>
        <dbReference type="ChEBI" id="CHEBI:15378"/>
        <dbReference type="ChEBI" id="CHEBI:30616"/>
        <dbReference type="ChEBI" id="CHEBI:43474"/>
        <dbReference type="ChEBI" id="CHEBI:456216"/>
    </reaction>
</comment>
<comment type="activity regulation">
    <text evidence="1">ATPase activity is stimulated by ViaA.</text>
</comment>
<comment type="subunit">
    <text evidence="1">Homohexamer. Interacts with ViaA.</text>
</comment>
<comment type="subcellular location">
    <subcellularLocation>
        <location evidence="1">Cytoplasm</location>
    </subcellularLocation>
</comment>
<comment type="similarity">
    <text evidence="1">Belongs to the RavA family.</text>
</comment>
<comment type="sequence caution" evidence="2">
    <conflict type="erroneous initiation">
        <sequence resource="EMBL-CDS" id="ABB63920"/>
    </conflict>
</comment>
<name>RAVA_SHIDS</name>
<keyword id="KW-0067">ATP-binding</keyword>
<keyword id="KW-0143">Chaperone</keyword>
<keyword id="KW-0963">Cytoplasm</keyword>
<keyword id="KW-0378">Hydrolase</keyword>
<keyword id="KW-0547">Nucleotide-binding</keyword>
<keyword id="KW-1185">Reference proteome</keyword>
<dbReference type="EC" id="3.6.1.-" evidence="1"/>
<dbReference type="EMBL" id="CP000034">
    <property type="protein sequence ID" value="ABB63920.1"/>
    <property type="status" value="ALT_INIT"/>
    <property type="molecule type" value="Genomic_DNA"/>
</dbReference>
<dbReference type="RefSeq" id="WP_005016794.1">
    <property type="nucleotide sequence ID" value="NC_007606.1"/>
</dbReference>
<dbReference type="RefSeq" id="YP_405411.2">
    <property type="nucleotide sequence ID" value="NC_007606.1"/>
</dbReference>
<dbReference type="SMR" id="Q329T5"/>
<dbReference type="STRING" id="300267.SDY_4002"/>
<dbReference type="EnsemblBacteria" id="ABB63920">
    <property type="protein sequence ID" value="ABB63920"/>
    <property type="gene ID" value="SDY_4002"/>
</dbReference>
<dbReference type="KEGG" id="sdy:SDY_4002"/>
<dbReference type="PATRIC" id="fig|300267.13.peg.4714"/>
<dbReference type="HOGENOM" id="CLU_018678_1_0_6"/>
<dbReference type="Proteomes" id="UP000002716">
    <property type="component" value="Chromosome"/>
</dbReference>
<dbReference type="GO" id="GO:0005737">
    <property type="term" value="C:cytoplasm"/>
    <property type="evidence" value="ECO:0007669"/>
    <property type="project" value="UniProtKB-SubCell"/>
</dbReference>
<dbReference type="GO" id="GO:0005524">
    <property type="term" value="F:ATP binding"/>
    <property type="evidence" value="ECO:0007669"/>
    <property type="project" value="UniProtKB-KW"/>
</dbReference>
<dbReference type="GO" id="GO:0016887">
    <property type="term" value="F:ATP hydrolysis activity"/>
    <property type="evidence" value="ECO:0007669"/>
    <property type="project" value="UniProtKB-UniRule"/>
</dbReference>
<dbReference type="CDD" id="cd00009">
    <property type="entry name" value="AAA"/>
    <property type="match status" value="1"/>
</dbReference>
<dbReference type="FunFam" id="3.40.50.300:FF:000410">
    <property type="entry name" value="ATPase RavA"/>
    <property type="match status" value="1"/>
</dbReference>
<dbReference type="Gene3D" id="1.20.58.1510">
    <property type="match status" value="1"/>
</dbReference>
<dbReference type="Gene3D" id="2.40.128.430">
    <property type="match status" value="1"/>
</dbReference>
<dbReference type="Gene3D" id="3.40.50.300">
    <property type="entry name" value="P-loop containing nucleotide triphosphate hydrolases"/>
    <property type="match status" value="1"/>
</dbReference>
<dbReference type="HAMAP" id="MF_01625">
    <property type="entry name" value="ATPase_RavA"/>
    <property type="match status" value="1"/>
</dbReference>
<dbReference type="InterPro" id="IPR003593">
    <property type="entry name" value="AAA+_ATPase"/>
</dbReference>
<dbReference type="InterPro" id="IPR023671">
    <property type="entry name" value="ATPase_RavA"/>
</dbReference>
<dbReference type="InterPro" id="IPR022547">
    <property type="entry name" value="ATPase_RavA_C"/>
</dbReference>
<dbReference type="InterPro" id="IPR045427">
    <property type="entry name" value="MoxR"/>
</dbReference>
<dbReference type="InterPro" id="IPR027417">
    <property type="entry name" value="P-loop_NTPase"/>
</dbReference>
<dbReference type="InterPro" id="IPR041538">
    <property type="entry name" value="RavA-like_AAA_lid"/>
</dbReference>
<dbReference type="InterPro" id="IPR050513">
    <property type="entry name" value="RavA_ATPases"/>
</dbReference>
<dbReference type="InterPro" id="IPR046898">
    <property type="entry name" value="RavA_LARA_dom"/>
</dbReference>
<dbReference type="InterPro" id="IPR046932">
    <property type="entry name" value="RavA_LARA_sf"/>
</dbReference>
<dbReference type="NCBIfam" id="NF010054">
    <property type="entry name" value="PRK13531.1"/>
    <property type="match status" value="1"/>
</dbReference>
<dbReference type="PANTHER" id="PTHR32204">
    <property type="entry name" value="ATPASE RAVA"/>
    <property type="match status" value="1"/>
</dbReference>
<dbReference type="PANTHER" id="PTHR32204:SF0">
    <property type="entry name" value="ATPASE RAVA"/>
    <property type="match status" value="1"/>
</dbReference>
<dbReference type="Pfam" id="PF17868">
    <property type="entry name" value="AAA_lid_8"/>
    <property type="match status" value="1"/>
</dbReference>
<dbReference type="Pfam" id="PF12592">
    <property type="entry name" value="ATPase_RavA_C"/>
    <property type="match status" value="1"/>
</dbReference>
<dbReference type="Pfam" id="PF20030">
    <property type="entry name" value="bpMoxR"/>
    <property type="match status" value="1"/>
</dbReference>
<dbReference type="Pfam" id="PF20265">
    <property type="entry name" value="LARA_dom"/>
    <property type="match status" value="1"/>
</dbReference>
<dbReference type="SMART" id="SM00382">
    <property type="entry name" value="AAA"/>
    <property type="match status" value="1"/>
</dbReference>
<dbReference type="SUPFAM" id="SSF52540">
    <property type="entry name" value="P-loop containing nucleoside triphosphate hydrolases"/>
    <property type="match status" value="1"/>
</dbReference>
<organism>
    <name type="scientific">Shigella dysenteriae serotype 1 (strain Sd197)</name>
    <dbReference type="NCBI Taxonomy" id="300267"/>
    <lineage>
        <taxon>Bacteria</taxon>
        <taxon>Pseudomonadati</taxon>
        <taxon>Pseudomonadota</taxon>
        <taxon>Gammaproteobacteria</taxon>
        <taxon>Enterobacterales</taxon>
        <taxon>Enterobacteriaceae</taxon>
        <taxon>Shigella</taxon>
    </lineage>
</organism>
<sequence length="498" mass="56496">MAHPHLLAERISRLSSSLEKGLYERSHAIRLCLLAALSGESMFLLGPPGIAKSLIARRLKFAFQNARAFEYLMTRFSTPEEVFGPLSIQALKDEGRYERLTSGYLPEAEIVFLDEIWKAGPAILNTLLTAINERQFRNGAHVEKIPMRLLVAASNELPEADSSLEALYDRMLIRLWLDKVQDKANFRSMLTSQQDENDNPVPDALQVTDEEYERWQKEIGEITLPDHVFELIFMLRQQLDKLPDAPYVSDRRWKKAIRLLQASAFFSGRSAVAPVDLILLKDCLWYDAQSLNLIQQQIDVLMTGHAWQQQGMLTRLGAIVQRHLQLQQQQSDKTALTVIRLGGIFSRRQQYQLPVNVTASTLTLLLQKPLKLHDMEVVHISFERSALEQWLSKGGEIRGKLNGIGFAQKLNLEVDSAQHLVVRDVSLQGSTLALPGSSAESMPGKIKQQLEELESDWRKQHALFSEQQRCLFIPGDWLGRIEASLQDVGAQIRQAQQC</sequence>
<reference key="1">
    <citation type="journal article" date="2005" name="Nucleic Acids Res.">
        <title>Genome dynamics and diversity of Shigella species, the etiologic agents of bacillary dysentery.</title>
        <authorList>
            <person name="Yang F."/>
            <person name="Yang J."/>
            <person name="Zhang X."/>
            <person name="Chen L."/>
            <person name="Jiang Y."/>
            <person name="Yan Y."/>
            <person name="Tang X."/>
            <person name="Wang J."/>
            <person name="Xiong Z."/>
            <person name="Dong J."/>
            <person name="Xue Y."/>
            <person name="Zhu Y."/>
            <person name="Xu X."/>
            <person name="Sun L."/>
            <person name="Chen S."/>
            <person name="Nie H."/>
            <person name="Peng J."/>
            <person name="Xu J."/>
            <person name="Wang Y."/>
            <person name="Yuan Z."/>
            <person name="Wen Y."/>
            <person name="Yao Z."/>
            <person name="Shen Y."/>
            <person name="Qiang B."/>
            <person name="Hou Y."/>
            <person name="Yu J."/>
            <person name="Jin Q."/>
        </authorList>
    </citation>
    <scope>NUCLEOTIDE SEQUENCE [LARGE SCALE GENOMIC DNA]</scope>
    <source>
        <strain>Sd197</strain>
    </source>
</reference>
<evidence type="ECO:0000255" key="1">
    <source>
        <dbReference type="HAMAP-Rule" id="MF_01625"/>
    </source>
</evidence>
<evidence type="ECO:0000305" key="2"/>